<name>SOX1_HUMAN</name>
<comment type="function">
    <text evidence="1">Transcriptional activator. May function as a switch in neuronal development. Keeps neural cells undifferentiated by counteracting the activity of proneural proteins and suppresses neuronal differentiation (By similarity).</text>
</comment>
<comment type="interaction">
    <interactant intactId="EBI-2935583">
        <id>O00570</id>
    </interactant>
    <interactant intactId="EBI-518675">
        <id>P40763</id>
        <label>STAT3</label>
    </interactant>
    <organismsDiffer>false</organismsDiffer>
    <experiments>2</experiments>
</comment>
<comment type="subcellular location">
    <subcellularLocation>
        <location evidence="5">Nucleus</location>
    </subcellularLocation>
</comment>
<comment type="tissue specificity">
    <text>Mainly expressed in the developing central nervous system.</text>
</comment>
<comment type="domain">
    <text evidence="2">The 9aaTAD motif is a transactivation domain present in a large number of yeast and animal transcription factors.</text>
</comment>
<reference key="1">
    <citation type="journal article" date="1997" name="Mamm. Genome">
        <title>Cloning and mapping of the human SOX1: a highly conserved gene expressed in the developing brain.</title>
        <authorList>
            <person name="Malas S."/>
            <person name="Duthie S.M."/>
            <person name="Mohri F."/>
            <person name="Lovell-Badge R."/>
            <person name="Episkopou V."/>
        </authorList>
    </citation>
    <scope>NUCLEOTIDE SEQUENCE [GENOMIC DNA]</scope>
</reference>
<reference key="2">
    <citation type="journal article" date="2004" name="Nature">
        <title>The DNA sequence and analysis of human chromosome 13.</title>
        <authorList>
            <person name="Dunham A."/>
            <person name="Matthews L.H."/>
            <person name="Burton J."/>
            <person name="Ashurst J.L."/>
            <person name="Howe K.L."/>
            <person name="Ashcroft K.J."/>
            <person name="Beare D.M."/>
            <person name="Burford D.C."/>
            <person name="Hunt S.E."/>
            <person name="Griffiths-Jones S."/>
            <person name="Jones M.C."/>
            <person name="Keenan S.J."/>
            <person name="Oliver K."/>
            <person name="Scott C.E."/>
            <person name="Ainscough R."/>
            <person name="Almeida J.P."/>
            <person name="Ambrose K.D."/>
            <person name="Andrews D.T."/>
            <person name="Ashwell R.I.S."/>
            <person name="Babbage A.K."/>
            <person name="Bagguley C.L."/>
            <person name="Bailey J."/>
            <person name="Bannerjee R."/>
            <person name="Barlow K.F."/>
            <person name="Bates K."/>
            <person name="Beasley H."/>
            <person name="Bird C.P."/>
            <person name="Bray-Allen S."/>
            <person name="Brown A.J."/>
            <person name="Brown J.Y."/>
            <person name="Burrill W."/>
            <person name="Carder C."/>
            <person name="Carter N.P."/>
            <person name="Chapman J.C."/>
            <person name="Clamp M.E."/>
            <person name="Clark S.Y."/>
            <person name="Clarke G."/>
            <person name="Clee C.M."/>
            <person name="Clegg S.C."/>
            <person name="Cobley V."/>
            <person name="Collins J.E."/>
            <person name="Corby N."/>
            <person name="Coville G.J."/>
            <person name="Deloukas P."/>
            <person name="Dhami P."/>
            <person name="Dunham I."/>
            <person name="Dunn M."/>
            <person name="Earthrowl M.E."/>
            <person name="Ellington A.G."/>
            <person name="Faulkner L."/>
            <person name="Frankish A.G."/>
            <person name="Frankland J."/>
            <person name="French L."/>
            <person name="Garner P."/>
            <person name="Garnett J."/>
            <person name="Gilbert J.G.R."/>
            <person name="Gilson C.J."/>
            <person name="Ghori J."/>
            <person name="Grafham D.V."/>
            <person name="Gribble S.M."/>
            <person name="Griffiths C."/>
            <person name="Hall R.E."/>
            <person name="Hammond S."/>
            <person name="Harley J.L."/>
            <person name="Hart E.A."/>
            <person name="Heath P.D."/>
            <person name="Howden P.J."/>
            <person name="Huckle E.J."/>
            <person name="Hunt P.J."/>
            <person name="Hunt A.R."/>
            <person name="Johnson C."/>
            <person name="Johnson D."/>
            <person name="Kay M."/>
            <person name="Kimberley A.M."/>
            <person name="King A."/>
            <person name="Laird G.K."/>
            <person name="Langford C.J."/>
            <person name="Lawlor S."/>
            <person name="Leongamornlert D.A."/>
            <person name="Lloyd D.M."/>
            <person name="Lloyd C."/>
            <person name="Loveland J.E."/>
            <person name="Lovell J."/>
            <person name="Martin S."/>
            <person name="Mashreghi-Mohammadi M."/>
            <person name="McLaren S.J."/>
            <person name="McMurray A."/>
            <person name="Milne S."/>
            <person name="Moore M.J.F."/>
            <person name="Nickerson T."/>
            <person name="Palmer S.A."/>
            <person name="Pearce A.V."/>
            <person name="Peck A.I."/>
            <person name="Pelan S."/>
            <person name="Phillimore B."/>
            <person name="Porter K.M."/>
            <person name="Rice C.M."/>
            <person name="Searle S."/>
            <person name="Sehra H.K."/>
            <person name="Shownkeen R."/>
            <person name="Skuce C.D."/>
            <person name="Smith M."/>
            <person name="Steward C.A."/>
            <person name="Sycamore N."/>
            <person name="Tester J."/>
            <person name="Thomas D.W."/>
            <person name="Tracey A."/>
            <person name="Tromans A."/>
            <person name="Tubby B."/>
            <person name="Wall M."/>
            <person name="Wallis J.M."/>
            <person name="West A.P."/>
            <person name="Whitehead S.L."/>
            <person name="Willey D.L."/>
            <person name="Wilming L."/>
            <person name="Wray P.W."/>
            <person name="Wright M.W."/>
            <person name="Young L."/>
            <person name="Coulson A."/>
            <person name="Durbin R.M."/>
            <person name="Hubbard T."/>
            <person name="Sulston J.E."/>
            <person name="Beck S."/>
            <person name="Bentley D.R."/>
            <person name="Rogers J."/>
            <person name="Ross M.T."/>
        </authorList>
    </citation>
    <scope>NUCLEOTIDE SEQUENCE [LARGE SCALE GENOMIC DNA]</scope>
</reference>
<reference key="3">
    <citation type="submission" date="2005-07" db="EMBL/GenBank/DDBJ databases">
        <authorList>
            <person name="Mural R.J."/>
            <person name="Istrail S."/>
            <person name="Sutton G.G."/>
            <person name="Florea L."/>
            <person name="Halpern A.L."/>
            <person name="Mobarry C.M."/>
            <person name="Lippert R."/>
            <person name="Walenz B."/>
            <person name="Shatkay H."/>
            <person name="Dew I."/>
            <person name="Miller J.R."/>
            <person name="Flanigan M.J."/>
            <person name="Edwards N.J."/>
            <person name="Bolanos R."/>
            <person name="Fasulo D."/>
            <person name="Halldorsson B.V."/>
            <person name="Hannenhalli S."/>
            <person name="Turner R."/>
            <person name="Yooseph S."/>
            <person name="Lu F."/>
            <person name="Nusskern D.R."/>
            <person name="Shue B.C."/>
            <person name="Zheng X.H."/>
            <person name="Zhong F."/>
            <person name="Delcher A.L."/>
            <person name="Huson D.H."/>
            <person name="Kravitz S.A."/>
            <person name="Mouchard L."/>
            <person name="Reinert K."/>
            <person name="Remington K.A."/>
            <person name="Clark A.G."/>
            <person name="Waterman M.S."/>
            <person name="Eichler E.E."/>
            <person name="Adams M.D."/>
            <person name="Hunkapiller M.W."/>
            <person name="Myers E.W."/>
            <person name="Venter J.C."/>
        </authorList>
    </citation>
    <scope>NUCLEOTIDE SEQUENCE [LARGE SCALE GENOMIC DNA]</scope>
</reference>
<organism>
    <name type="scientific">Homo sapiens</name>
    <name type="common">Human</name>
    <dbReference type="NCBI Taxonomy" id="9606"/>
    <lineage>
        <taxon>Eukaryota</taxon>
        <taxon>Metazoa</taxon>
        <taxon>Chordata</taxon>
        <taxon>Craniata</taxon>
        <taxon>Vertebrata</taxon>
        <taxon>Euteleostomi</taxon>
        <taxon>Mammalia</taxon>
        <taxon>Eutheria</taxon>
        <taxon>Euarchontoglires</taxon>
        <taxon>Primates</taxon>
        <taxon>Haplorrhini</taxon>
        <taxon>Catarrhini</taxon>
        <taxon>Hominidae</taxon>
        <taxon>Homo</taxon>
    </lineage>
</organism>
<sequence>MYSMMMETDLHSPGGAQAPTNLSGPAGAGGGGGGGGGGGGGGGAKANQDRVKRPMNAFMVWSRGQRRKMAQENPKMHNSEISKRLGAEWKVMSEAEKRPFIDEAKRLRALHMKEHPDYKYRPRRKTKTLLKKDKYSLAGGLLAAGAGGGGAAVAMGVGVGVGAAAVGQRLESPGGAAGGGYAHVNGWANGAYPGSVAAAAAAAAMMQEAQLAYGQHPGAGGAHPHAHPAHPHPHHPHAHPHNPQPMHRYDMGALQYSPISNSQGYMSASPSGYGGLPYGAAAAAAAAAGGAHQNSAVAAAAAAAAASSGALGALGSLVKSEPSGSPPAPAHSRAPCPGDLREMISMYLPAGEGGDPAAAAAAAAQSRLHSLPQHYQGAGAGVNGTVPLTHI</sequence>
<proteinExistence type="evidence at protein level"/>
<evidence type="ECO:0000250" key="1"/>
<evidence type="ECO:0000250" key="2">
    <source>
        <dbReference type="UniProtKB" id="P41225"/>
    </source>
</evidence>
<evidence type="ECO:0000255" key="3">
    <source>
        <dbReference type="PROSITE-ProRule" id="PRU00267"/>
    </source>
</evidence>
<evidence type="ECO:0000256" key="4">
    <source>
        <dbReference type="SAM" id="MobiDB-lite"/>
    </source>
</evidence>
<evidence type="ECO:0000305" key="5"/>
<protein>
    <recommendedName>
        <fullName>Transcription factor SOX-1</fullName>
    </recommendedName>
</protein>
<gene>
    <name type="primary">SOX1</name>
</gene>
<accession>O00570</accession>
<accession>Q5W0Q1</accession>
<dbReference type="EMBL" id="Y13436">
    <property type="protein sequence ID" value="CAA73847.1"/>
    <property type="molecule type" value="Genomic_DNA"/>
</dbReference>
<dbReference type="EMBL" id="AL138691">
    <property type="status" value="NOT_ANNOTATED_CDS"/>
    <property type="molecule type" value="Genomic_DNA"/>
</dbReference>
<dbReference type="EMBL" id="CH471085">
    <property type="protein sequence ID" value="EAX09158.1"/>
    <property type="molecule type" value="Genomic_DNA"/>
</dbReference>
<dbReference type="CCDS" id="CCDS9523.1"/>
<dbReference type="RefSeq" id="NP_005977.2">
    <property type="nucleotide sequence ID" value="NM_005986.2"/>
</dbReference>
<dbReference type="SMR" id="O00570"/>
<dbReference type="BioGRID" id="112539">
    <property type="interactions" value="6"/>
</dbReference>
<dbReference type="FunCoup" id="O00570">
    <property type="interactions" value="478"/>
</dbReference>
<dbReference type="IntAct" id="O00570">
    <property type="interactions" value="5"/>
</dbReference>
<dbReference type="MINT" id="O00570"/>
<dbReference type="STRING" id="9606.ENSP00000330218"/>
<dbReference type="iPTMnet" id="O00570"/>
<dbReference type="PhosphoSitePlus" id="O00570"/>
<dbReference type="BioMuta" id="SOX1"/>
<dbReference type="jPOST" id="O00570"/>
<dbReference type="MassIVE" id="O00570"/>
<dbReference type="PaxDb" id="9606-ENSP00000330218"/>
<dbReference type="PeptideAtlas" id="O00570"/>
<dbReference type="Antibodypedia" id="25675">
    <property type="antibodies" value="307 antibodies from 36 providers"/>
</dbReference>
<dbReference type="DNASU" id="6656"/>
<dbReference type="Ensembl" id="ENST00000330949.3">
    <property type="protein sequence ID" value="ENSP00000330218.1"/>
    <property type="gene ID" value="ENSG00000182968.5"/>
</dbReference>
<dbReference type="GeneID" id="6656"/>
<dbReference type="KEGG" id="hsa:6656"/>
<dbReference type="MANE-Select" id="ENST00000330949.3">
    <property type="protein sequence ID" value="ENSP00000330218.1"/>
    <property type="RefSeq nucleotide sequence ID" value="NM_005986.3"/>
    <property type="RefSeq protein sequence ID" value="NP_005977.2"/>
</dbReference>
<dbReference type="UCSC" id="uc001vsb.2">
    <property type="organism name" value="human"/>
</dbReference>
<dbReference type="AGR" id="HGNC:11189"/>
<dbReference type="CTD" id="6656"/>
<dbReference type="DisGeNET" id="6656"/>
<dbReference type="GeneCards" id="SOX1"/>
<dbReference type="HGNC" id="HGNC:11189">
    <property type="gene designation" value="SOX1"/>
</dbReference>
<dbReference type="HPA" id="ENSG00000182968">
    <property type="expression patterns" value="Tissue enriched (brain)"/>
</dbReference>
<dbReference type="MIM" id="602148">
    <property type="type" value="gene"/>
</dbReference>
<dbReference type="neXtProt" id="NX_O00570"/>
<dbReference type="OpenTargets" id="ENSG00000182968"/>
<dbReference type="PharmGKB" id="PA36026"/>
<dbReference type="VEuPathDB" id="HostDB:ENSG00000182968"/>
<dbReference type="eggNOG" id="KOG0527">
    <property type="taxonomic scope" value="Eukaryota"/>
</dbReference>
<dbReference type="GeneTree" id="ENSGT00940000162479"/>
<dbReference type="HOGENOM" id="CLU_021123_0_0_1"/>
<dbReference type="InParanoid" id="O00570"/>
<dbReference type="OMA" id="MMETDMH"/>
<dbReference type="OrthoDB" id="6247875at2759"/>
<dbReference type="PAN-GO" id="O00570">
    <property type="GO annotations" value="5 GO annotations based on evolutionary models"/>
</dbReference>
<dbReference type="PhylomeDB" id="O00570"/>
<dbReference type="TreeFam" id="TF351735"/>
<dbReference type="PathwayCommons" id="O00570"/>
<dbReference type="Reactome" id="R-HSA-9823739">
    <property type="pathway name" value="Formation of the anterior neural plate"/>
</dbReference>
<dbReference type="Reactome" id="R-HSA-9832991">
    <property type="pathway name" value="Formation of the posterior neural plate"/>
</dbReference>
<dbReference type="SignaLink" id="O00570"/>
<dbReference type="BioGRID-ORCS" id="6656">
    <property type="hits" value="12 hits in 1166 CRISPR screens"/>
</dbReference>
<dbReference type="GenomeRNAi" id="6656"/>
<dbReference type="Pharos" id="O00570">
    <property type="development level" value="Tbio"/>
</dbReference>
<dbReference type="PRO" id="PR:O00570"/>
<dbReference type="Proteomes" id="UP000005640">
    <property type="component" value="Chromosome 13"/>
</dbReference>
<dbReference type="RNAct" id="O00570">
    <property type="molecule type" value="protein"/>
</dbReference>
<dbReference type="Bgee" id="ENSG00000182968">
    <property type="expression patterns" value="Expressed in ventricular zone and 42 other cell types or tissues"/>
</dbReference>
<dbReference type="GO" id="GO:0000785">
    <property type="term" value="C:chromatin"/>
    <property type="evidence" value="ECO:0000247"/>
    <property type="project" value="NTNU_SB"/>
</dbReference>
<dbReference type="GO" id="GO:0005634">
    <property type="term" value="C:nucleus"/>
    <property type="evidence" value="ECO:0000318"/>
    <property type="project" value="GO_Central"/>
</dbReference>
<dbReference type="GO" id="GO:0003677">
    <property type="term" value="F:DNA binding"/>
    <property type="evidence" value="ECO:0000303"/>
    <property type="project" value="UniProtKB"/>
</dbReference>
<dbReference type="GO" id="GO:0001228">
    <property type="term" value="F:DNA-binding transcription activator activity, RNA polymerase II-specific"/>
    <property type="evidence" value="ECO:0000318"/>
    <property type="project" value="GO_Central"/>
</dbReference>
<dbReference type="GO" id="GO:0003700">
    <property type="term" value="F:DNA-binding transcription factor activity"/>
    <property type="evidence" value="ECO:0000303"/>
    <property type="project" value="UniProtKB"/>
</dbReference>
<dbReference type="GO" id="GO:0000981">
    <property type="term" value="F:DNA-binding transcription factor activity, RNA polymerase II-specific"/>
    <property type="evidence" value="ECO:0000247"/>
    <property type="project" value="NTNU_SB"/>
</dbReference>
<dbReference type="GO" id="GO:0000978">
    <property type="term" value="F:RNA polymerase II cis-regulatory region sequence-specific DNA binding"/>
    <property type="evidence" value="ECO:0000314"/>
    <property type="project" value="UniProtKB"/>
</dbReference>
<dbReference type="GO" id="GO:0007420">
    <property type="term" value="P:brain development"/>
    <property type="evidence" value="ECO:0000318"/>
    <property type="project" value="GO_Central"/>
</dbReference>
<dbReference type="GO" id="GO:1990830">
    <property type="term" value="P:cellular response to leukemia inhibitory factor"/>
    <property type="evidence" value="ECO:0007669"/>
    <property type="project" value="Ensembl"/>
</dbReference>
<dbReference type="GO" id="GO:0006325">
    <property type="term" value="P:chromatin organization"/>
    <property type="evidence" value="ECO:0000303"/>
    <property type="project" value="UniProtKB"/>
</dbReference>
<dbReference type="GO" id="GO:0021884">
    <property type="term" value="P:forebrain neuron development"/>
    <property type="evidence" value="ECO:0007669"/>
    <property type="project" value="Ensembl"/>
</dbReference>
<dbReference type="GO" id="GO:1904936">
    <property type="term" value="P:interneuron migration"/>
    <property type="evidence" value="ECO:0000250"/>
    <property type="project" value="UniProtKB"/>
</dbReference>
<dbReference type="GO" id="GO:0002089">
    <property type="term" value="P:lens morphogenesis in camera-type eye"/>
    <property type="evidence" value="ECO:0007669"/>
    <property type="project" value="Ensembl"/>
</dbReference>
<dbReference type="GO" id="GO:0000122">
    <property type="term" value="P:negative regulation of transcription by RNA polymerase II"/>
    <property type="evidence" value="ECO:0000250"/>
    <property type="project" value="UniProtKB"/>
</dbReference>
<dbReference type="GO" id="GO:0030182">
    <property type="term" value="P:neuron differentiation"/>
    <property type="evidence" value="ECO:0000318"/>
    <property type="project" value="GO_Central"/>
</dbReference>
<dbReference type="GO" id="GO:0045944">
    <property type="term" value="P:positive regulation of transcription by RNA polymerase II"/>
    <property type="evidence" value="ECO:0000318"/>
    <property type="project" value="GO_Central"/>
</dbReference>
<dbReference type="GO" id="GO:0006355">
    <property type="term" value="P:regulation of DNA-templated transcription"/>
    <property type="evidence" value="ECO:0000303"/>
    <property type="project" value="UniProtKB"/>
</dbReference>
<dbReference type="GO" id="GO:0048713">
    <property type="term" value="P:regulation of oligodendrocyte differentiation"/>
    <property type="evidence" value="ECO:0000250"/>
    <property type="project" value="UniProtKB"/>
</dbReference>
<dbReference type="GO" id="GO:0021521">
    <property type="term" value="P:ventral spinal cord interneuron specification"/>
    <property type="evidence" value="ECO:0007669"/>
    <property type="project" value="Ensembl"/>
</dbReference>
<dbReference type="CDD" id="cd01388">
    <property type="entry name" value="HMG-box_SoxB"/>
    <property type="match status" value="1"/>
</dbReference>
<dbReference type="FunFam" id="1.10.30.10:FF:000002">
    <property type="entry name" value="transcription factor Sox-2"/>
    <property type="match status" value="1"/>
</dbReference>
<dbReference type="Gene3D" id="1.10.30.10">
    <property type="entry name" value="High mobility group box domain"/>
    <property type="match status" value="1"/>
</dbReference>
<dbReference type="InterPro" id="IPR009071">
    <property type="entry name" value="HMG_box_dom"/>
</dbReference>
<dbReference type="InterPro" id="IPR036910">
    <property type="entry name" value="HMG_box_dom_sf"/>
</dbReference>
<dbReference type="InterPro" id="IPR022097">
    <property type="entry name" value="SOX_fam"/>
</dbReference>
<dbReference type="InterPro" id="IPR050140">
    <property type="entry name" value="SRY-related_HMG-box_TF-like"/>
</dbReference>
<dbReference type="PANTHER" id="PTHR10270">
    <property type="entry name" value="SOX TRANSCRIPTION FACTOR"/>
    <property type="match status" value="1"/>
</dbReference>
<dbReference type="PANTHER" id="PTHR10270:SF328">
    <property type="entry name" value="TRANSCRIPTION FACTOR SOX-1"/>
    <property type="match status" value="1"/>
</dbReference>
<dbReference type="Pfam" id="PF00505">
    <property type="entry name" value="HMG_box"/>
    <property type="match status" value="1"/>
</dbReference>
<dbReference type="Pfam" id="PF12336">
    <property type="entry name" value="SOXp"/>
    <property type="match status" value="1"/>
</dbReference>
<dbReference type="SMART" id="SM00398">
    <property type="entry name" value="HMG"/>
    <property type="match status" value="1"/>
</dbReference>
<dbReference type="SUPFAM" id="SSF47095">
    <property type="entry name" value="HMG-box"/>
    <property type="match status" value="1"/>
</dbReference>
<dbReference type="PROSITE" id="PS50118">
    <property type="entry name" value="HMG_BOX_2"/>
    <property type="match status" value="1"/>
</dbReference>
<feature type="chain" id="PRO_0000048712" description="Transcription factor SOX-1">
    <location>
        <begin position="1"/>
        <end position="391"/>
    </location>
</feature>
<feature type="DNA-binding region" description="HMG box" evidence="3">
    <location>
        <begin position="51"/>
        <end position="119"/>
    </location>
</feature>
<feature type="region of interest" description="Disordered" evidence="4">
    <location>
        <begin position="1"/>
        <end position="52"/>
    </location>
</feature>
<feature type="region of interest" description="Disordered" evidence="4">
    <location>
        <begin position="214"/>
        <end position="249"/>
    </location>
</feature>
<feature type="short sequence motif" description="9aaTAD" evidence="2">
    <location>
        <begin position="342"/>
        <end position="350"/>
    </location>
</feature>
<feature type="compositionally biased region" description="Gly residues" evidence="4">
    <location>
        <begin position="26"/>
        <end position="44"/>
    </location>
</feature>
<feature type="compositionally biased region" description="Basic residues" evidence="4">
    <location>
        <begin position="224"/>
        <end position="240"/>
    </location>
</feature>
<feature type="sequence conflict" description="In Ref. 1; CAA73847." evidence="5" ref="1">
    <original>A</original>
    <variation>P</variation>
    <location>
        <position position="165"/>
    </location>
</feature>
<feature type="sequence conflict" description="In Ref. 1; CAA73847." evidence="5" ref="1">
    <original>G</original>
    <variation>A</variation>
    <location>
        <position position="180"/>
    </location>
</feature>
<feature type="sequence conflict" description="In Ref. 1; CAA73847." evidence="5" ref="1">
    <original>AH</original>
    <variation>RT</variation>
    <location>
        <begin position="226"/>
        <end position="227"/>
    </location>
</feature>
<feature type="sequence conflict" description="In Ref. 1; CAA73847." evidence="5" ref="1">
    <location>
        <begin position="287"/>
        <end position="290"/>
    </location>
</feature>
<keyword id="KW-0010">Activator</keyword>
<keyword id="KW-0238">DNA-binding</keyword>
<keyword id="KW-0539">Nucleus</keyword>
<keyword id="KW-1267">Proteomics identification</keyword>
<keyword id="KW-1185">Reference proteome</keyword>
<keyword id="KW-0804">Transcription</keyword>
<keyword id="KW-0805">Transcription regulation</keyword>